<accession>Q4UTU6</accession>
<feature type="chain" id="PRO_0000236975" description="Xylose isomerase 1">
    <location>
        <begin position="1"/>
        <end position="446"/>
    </location>
</feature>
<feature type="active site" evidence="1">
    <location>
        <position position="109"/>
    </location>
</feature>
<feature type="active site" evidence="1">
    <location>
        <position position="112"/>
    </location>
</feature>
<feature type="binding site" evidence="1">
    <location>
        <position position="240"/>
    </location>
    <ligand>
        <name>Mg(2+)</name>
        <dbReference type="ChEBI" id="CHEBI:18420"/>
        <label>1</label>
    </ligand>
</feature>
<feature type="binding site" evidence="1">
    <location>
        <position position="276"/>
    </location>
    <ligand>
        <name>Mg(2+)</name>
        <dbReference type="ChEBI" id="CHEBI:18420"/>
        <label>1</label>
    </ligand>
</feature>
<feature type="binding site" evidence="1">
    <location>
        <position position="276"/>
    </location>
    <ligand>
        <name>Mg(2+)</name>
        <dbReference type="ChEBI" id="CHEBI:18420"/>
        <label>2</label>
    </ligand>
</feature>
<feature type="binding site" evidence="1">
    <location>
        <position position="279"/>
    </location>
    <ligand>
        <name>Mg(2+)</name>
        <dbReference type="ChEBI" id="CHEBI:18420"/>
        <label>2</label>
    </ligand>
</feature>
<feature type="binding site" evidence="1">
    <location>
        <position position="304"/>
    </location>
    <ligand>
        <name>Mg(2+)</name>
        <dbReference type="ChEBI" id="CHEBI:18420"/>
        <label>1</label>
    </ligand>
</feature>
<feature type="binding site" evidence="1">
    <location>
        <position position="315"/>
    </location>
    <ligand>
        <name>Mg(2+)</name>
        <dbReference type="ChEBI" id="CHEBI:18420"/>
        <label>2</label>
    </ligand>
</feature>
<feature type="binding site" evidence="1">
    <location>
        <position position="317"/>
    </location>
    <ligand>
        <name>Mg(2+)</name>
        <dbReference type="ChEBI" id="CHEBI:18420"/>
        <label>2</label>
    </ligand>
</feature>
<feature type="binding site" evidence="1">
    <location>
        <position position="347"/>
    </location>
    <ligand>
        <name>Mg(2+)</name>
        <dbReference type="ChEBI" id="CHEBI:18420"/>
        <label>1</label>
    </ligand>
</feature>
<reference key="1">
    <citation type="journal article" date="2005" name="Genome Res.">
        <title>Comparative and functional genomic analyses of the pathogenicity of phytopathogen Xanthomonas campestris pv. campestris.</title>
        <authorList>
            <person name="Qian W."/>
            <person name="Jia Y."/>
            <person name="Ren S.-X."/>
            <person name="He Y.-Q."/>
            <person name="Feng J.-X."/>
            <person name="Lu L.-F."/>
            <person name="Sun Q."/>
            <person name="Ying G."/>
            <person name="Tang D.-J."/>
            <person name="Tang H."/>
            <person name="Wu W."/>
            <person name="Hao P."/>
            <person name="Wang L."/>
            <person name="Jiang B.-L."/>
            <person name="Zeng S."/>
            <person name="Gu W.-Y."/>
            <person name="Lu G."/>
            <person name="Rong L."/>
            <person name="Tian Y."/>
            <person name="Yao Z."/>
            <person name="Fu G."/>
            <person name="Chen B."/>
            <person name="Fang R."/>
            <person name="Qiang B."/>
            <person name="Chen Z."/>
            <person name="Zhao G.-P."/>
            <person name="Tang J.-L."/>
            <person name="He C."/>
        </authorList>
    </citation>
    <scope>NUCLEOTIDE SEQUENCE [LARGE SCALE GENOMIC DNA]</scope>
    <source>
        <strain>8004</strain>
    </source>
</reference>
<organism>
    <name type="scientific">Xanthomonas campestris pv. campestris (strain 8004)</name>
    <dbReference type="NCBI Taxonomy" id="314565"/>
    <lineage>
        <taxon>Bacteria</taxon>
        <taxon>Pseudomonadati</taxon>
        <taxon>Pseudomonadota</taxon>
        <taxon>Gammaproteobacteria</taxon>
        <taxon>Lysobacterales</taxon>
        <taxon>Lysobacteraceae</taxon>
        <taxon>Xanthomonas</taxon>
    </lineage>
</organism>
<comment type="catalytic activity">
    <reaction evidence="1">
        <text>alpha-D-xylose = alpha-D-xylulofuranose</text>
        <dbReference type="Rhea" id="RHEA:22816"/>
        <dbReference type="ChEBI" id="CHEBI:28518"/>
        <dbReference type="ChEBI" id="CHEBI:188998"/>
        <dbReference type="EC" id="5.3.1.5"/>
    </reaction>
</comment>
<comment type="cofactor">
    <cofactor evidence="1">
        <name>Mg(2+)</name>
        <dbReference type="ChEBI" id="CHEBI:18420"/>
    </cofactor>
    <text evidence="1">Binds 2 magnesium ions per subunit.</text>
</comment>
<comment type="subunit">
    <text evidence="1">Homotetramer.</text>
</comment>
<comment type="subcellular location">
    <subcellularLocation>
        <location evidence="1">Cytoplasm</location>
    </subcellularLocation>
</comment>
<comment type="similarity">
    <text evidence="1">Belongs to the xylose isomerase family.</text>
</comment>
<dbReference type="EC" id="5.3.1.5" evidence="1"/>
<dbReference type="EMBL" id="CP000050">
    <property type="protein sequence ID" value="AAY49527.1"/>
    <property type="molecule type" value="Genomic_DNA"/>
</dbReference>
<dbReference type="SMR" id="Q4UTU6"/>
<dbReference type="KEGG" id="xcb:XC_2477"/>
<dbReference type="HOGENOM" id="CLU_037261_1_0_6"/>
<dbReference type="Proteomes" id="UP000000420">
    <property type="component" value="Chromosome"/>
</dbReference>
<dbReference type="GO" id="GO:0005737">
    <property type="term" value="C:cytoplasm"/>
    <property type="evidence" value="ECO:0007669"/>
    <property type="project" value="UniProtKB-SubCell"/>
</dbReference>
<dbReference type="GO" id="GO:0000287">
    <property type="term" value="F:magnesium ion binding"/>
    <property type="evidence" value="ECO:0007669"/>
    <property type="project" value="UniProtKB-UniRule"/>
</dbReference>
<dbReference type="GO" id="GO:0009045">
    <property type="term" value="F:xylose isomerase activity"/>
    <property type="evidence" value="ECO:0007669"/>
    <property type="project" value="UniProtKB-UniRule"/>
</dbReference>
<dbReference type="GO" id="GO:0042732">
    <property type="term" value="P:D-xylose metabolic process"/>
    <property type="evidence" value="ECO:0007669"/>
    <property type="project" value="UniProtKB-UniRule"/>
</dbReference>
<dbReference type="FunFam" id="3.20.20.150:FF:000002">
    <property type="entry name" value="Xylose isomerase"/>
    <property type="match status" value="1"/>
</dbReference>
<dbReference type="Gene3D" id="3.20.20.150">
    <property type="entry name" value="Divalent-metal-dependent TIM barrel enzymes"/>
    <property type="match status" value="1"/>
</dbReference>
<dbReference type="HAMAP" id="MF_00455">
    <property type="entry name" value="Xylose_isom_A"/>
    <property type="match status" value="1"/>
</dbReference>
<dbReference type="InterPro" id="IPR036237">
    <property type="entry name" value="Xyl_isomerase-like_sf"/>
</dbReference>
<dbReference type="InterPro" id="IPR013452">
    <property type="entry name" value="Xylose_isom_bac"/>
</dbReference>
<dbReference type="InterPro" id="IPR001998">
    <property type="entry name" value="Xylose_isomerase"/>
</dbReference>
<dbReference type="NCBIfam" id="NF003998">
    <property type="entry name" value="PRK05474.1"/>
    <property type="match status" value="1"/>
</dbReference>
<dbReference type="NCBIfam" id="NF009115">
    <property type="entry name" value="PRK12465.1"/>
    <property type="match status" value="1"/>
</dbReference>
<dbReference type="NCBIfam" id="TIGR02630">
    <property type="entry name" value="xylose_isom_A"/>
    <property type="match status" value="1"/>
</dbReference>
<dbReference type="PANTHER" id="PTHR48408">
    <property type="match status" value="1"/>
</dbReference>
<dbReference type="PANTHER" id="PTHR48408:SF1">
    <property type="entry name" value="XYLOSE ISOMERASE"/>
    <property type="match status" value="1"/>
</dbReference>
<dbReference type="PRINTS" id="PR00688">
    <property type="entry name" value="XYLOSISMRASE"/>
</dbReference>
<dbReference type="SUPFAM" id="SSF51658">
    <property type="entry name" value="Xylose isomerase-like"/>
    <property type="match status" value="1"/>
</dbReference>
<dbReference type="PROSITE" id="PS51415">
    <property type="entry name" value="XYLOSE_ISOMERASE"/>
    <property type="match status" value="1"/>
</dbReference>
<sequence length="446" mass="48872">MSNTVFIGAKEYFPGIGKIGFEGRDSDNPLAFKVYDANKQVAGKSMAEHLRFAVAYWHSFCGNGADPFGPGTRAYPWDVGNTALARAEAKSDAAFEFFTKLGVPYYCFHDIDLAPDADDIGEYENNLKHMVRIAKQRQADTGVKLLWGTANLFSHPRYMNGASTNPDFNVVARAAVQVKAAIDATVELGGENYVFWGGREGYACLHNTQMKREQDNMARFLTLARDYGRAIGFTGNFLIEPKPMEPMKHQYDFDSATVIGFLHQHGLDQDFKLNIEANHATLSGHSFEHDLQVASDAGLLGSIDANRGNPQNGWDTDQFPTDLYDTVGAMLVVLRQGGLAPGGLNFDAKVRRESSDPQDLFLAHIGGMDAFARGLEVADALLTSSPLETWRAQRYASFDSGAGADFANGTSTLADLAKYAAGRGEPTQVSGRQEAYENLINQYLTR</sequence>
<gene>
    <name evidence="1" type="primary">xylA1</name>
    <name type="ordered locus">XC_2477</name>
</gene>
<name>XYLA1_XANC8</name>
<keyword id="KW-0119">Carbohydrate metabolism</keyword>
<keyword id="KW-0963">Cytoplasm</keyword>
<keyword id="KW-0413">Isomerase</keyword>
<keyword id="KW-0460">Magnesium</keyword>
<keyword id="KW-0479">Metal-binding</keyword>
<keyword id="KW-0859">Xylose metabolism</keyword>
<evidence type="ECO:0000255" key="1">
    <source>
        <dbReference type="HAMAP-Rule" id="MF_00455"/>
    </source>
</evidence>
<protein>
    <recommendedName>
        <fullName evidence="1">Xylose isomerase 1</fullName>
        <ecNumber evidence="1">5.3.1.5</ecNumber>
    </recommendedName>
</protein>
<proteinExistence type="inferred from homology"/>